<dbReference type="EMBL" id="CP000356">
    <property type="protein sequence ID" value="ABF53413.1"/>
    <property type="molecule type" value="Genomic_DNA"/>
</dbReference>
<dbReference type="RefSeq" id="WP_011541993.1">
    <property type="nucleotide sequence ID" value="NC_008048.1"/>
</dbReference>
<dbReference type="SMR" id="Q1GSF9"/>
<dbReference type="STRING" id="317655.Sala_1700"/>
<dbReference type="KEGG" id="sal:Sala_1700"/>
<dbReference type="eggNOG" id="COG0222">
    <property type="taxonomic scope" value="Bacteria"/>
</dbReference>
<dbReference type="HOGENOM" id="CLU_086499_3_0_5"/>
<dbReference type="OrthoDB" id="9811748at2"/>
<dbReference type="Proteomes" id="UP000006578">
    <property type="component" value="Chromosome"/>
</dbReference>
<dbReference type="GO" id="GO:0022625">
    <property type="term" value="C:cytosolic large ribosomal subunit"/>
    <property type="evidence" value="ECO:0007669"/>
    <property type="project" value="TreeGrafter"/>
</dbReference>
<dbReference type="GO" id="GO:0003729">
    <property type="term" value="F:mRNA binding"/>
    <property type="evidence" value="ECO:0007669"/>
    <property type="project" value="TreeGrafter"/>
</dbReference>
<dbReference type="GO" id="GO:0003735">
    <property type="term" value="F:structural constituent of ribosome"/>
    <property type="evidence" value="ECO:0007669"/>
    <property type="project" value="InterPro"/>
</dbReference>
<dbReference type="GO" id="GO:0006412">
    <property type="term" value="P:translation"/>
    <property type="evidence" value="ECO:0007669"/>
    <property type="project" value="UniProtKB-UniRule"/>
</dbReference>
<dbReference type="CDD" id="cd00387">
    <property type="entry name" value="Ribosomal_L7_L12"/>
    <property type="match status" value="1"/>
</dbReference>
<dbReference type="FunFam" id="1.20.5.710:FF:000007">
    <property type="entry name" value="50S ribosomal protein L7/L12"/>
    <property type="match status" value="1"/>
</dbReference>
<dbReference type="FunFam" id="3.30.1390.10:FF:000001">
    <property type="entry name" value="50S ribosomal protein L7/L12"/>
    <property type="match status" value="1"/>
</dbReference>
<dbReference type="Gene3D" id="3.30.1390.10">
    <property type="match status" value="1"/>
</dbReference>
<dbReference type="Gene3D" id="1.20.5.710">
    <property type="entry name" value="Single helix bin"/>
    <property type="match status" value="1"/>
</dbReference>
<dbReference type="HAMAP" id="MF_00368">
    <property type="entry name" value="Ribosomal_bL12"/>
    <property type="match status" value="1"/>
</dbReference>
<dbReference type="InterPro" id="IPR000206">
    <property type="entry name" value="Ribosomal_bL12"/>
</dbReference>
<dbReference type="InterPro" id="IPR013823">
    <property type="entry name" value="Ribosomal_bL12_C"/>
</dbReference>
<dbReference type="InterPro" id="IPR014719">
    <property type="entry name" value="Ribosomal_bL12_C/ClpS-like"/>
</dbReference>
<dbReference type="InterPro" id="IPR008932">
    <property type="entry name" value="Ribosomal_bL12_oligo"/>
</dbReference>
<dbReference type="InterPro" id="IPR036235">
    <property type="entry name" value="Ribosomal_bL12_oligo_N_sf"/>
</dbReference>
<dbReference type="NCBIfam" id="TIGR00855">
    <property type="entry name" value="L12"/>
    <property type="match status" value="1"/>
</dbReference>
<dbReference type="PANTHER" id="PTHR45987">
    <property type="entry name" value="39S RIBOSOMAL PROTEIN L12"/>
    <property type="match status" value="1"/>
</dbReference>
<dbReference type="PANTHER" id="PTHR45987:SF4">
    <property type="entry name" value="LARGE RIBOSOMAL SUBUNIT PROTEIN BL12M"/>
    <property type="match status" value="1"/>
</dbReference>
<dbReference type="Pfam" id="PF00542">
    <property type="entry name" value="Ribosomal_L12"/>
    <property type="match status" value="1"/>
</dbReference>
<dbReference type="Pfam" id="PF16320">
    <property type="entry name" value="Ribosomal_L12_N"/>
    <property type="match status" value="1"/>
</dbReference>
<dbReference type="SUPFAM" id="SSF54736">
    <property type="entry name" value="ClpS-like"/>
    <property type="match status" value="1"/>
</dbReference>
<dbReference type="SUPFAM" id="SSF48300">
    <property type="entry name" value="Ribosomal protein L7/12, oligomerisation (N-terminal) domain"/>
    <property type="match status" value="1"/>
</dbReference>
<proteinExistence type="inferred from homology"/>
<sequence>MADLAKIVEDLSALTVLEAAELSKLLEEKWGVSAAAAVAVAAPGGAGAAAPAAEEKDEFDVILTGDGGNKINVIKEVRAITGLGLGEAKALVEGAPKAVKEGASKAEAEELKKKLEAAGATVELK</sequence>
<name>RL7_SPHAL</name>
<organism>
    <name type="scientific">Sphingopyxis alaskensis (strain DSM 13593 / LMG 18877 / RB2256)</name>
    <name type="common">Sphingomonas alaskensis</name>
    <dbReference type="NCBI Taxonomy" id="317655"/>
    <lineage>
        <taxon>Bacteria</taxon>
        <taxon>Pseudomonadati</taxon>
        <taxon>Pseudomonadota</taxon>
        <taxon>Alphaproteobacteria</taxon>
        <taxon>Sphingomonadales</taxon>
        <taxon>Sphingomonadaceae</taxon>
        <taxon>Sphingopyxis</taxon>
    </lineage>
</organism>
<reference key="1">
    <citation type="journal article" date="2009" name="Proc. Natl. Acad. Sci. U.S.A.">
        <title>The genomic basis of trophic strategy in marine bacteria.</title>
        <authorList>
            <person name="Lauro F.M."/>
            <person name="McDougald D."/>
            <person name="Thomas T."/>
            <person name="Williams T.J."/>
            <person name="Egan S."/>
            <person name="Rice S."/>
            <person name="DeMaere M.Z."/>
            <person name="Ting L."/>
            <person name="Ertan H."/>
            <person name="Johnson J."/>
            <person name="Ferriera S."/>
            <person name="Lapidus A."/>
            <person name="Anderson I."/>
            <person name="Kyrpides N."/>
            <person name="Munk A.C."/>
            <person name="Detter C."/>
            <person name="Han C.S."/>
            <person name="Brown M.V."/>
            <person name="Robb F.T."/>
            <person name="Kjelleberg S."/>
            <person name="Cavicchioli R."/>
        </authorList>
    </citation>
    <scope>NUCLEOTIDE SEQUENCE [LARGE SCALE GENOMIC DNA]</scope>
    <source>
        <strain>DSM 13593 / LMG 18877 / RB2256</strain>
    </source>
</reference>
<feature type="chain" id="PRO_1000007093" description="Large ribosomal subunit protein bL12">
    <location>
        <begin position="1"/>
        <end position="125"/>
    </location>
</feature>
<comment type="function">
    <text evidence="1">Forms part of the ribosomal stalk which helps the ribosome interact with GTP-bound translation factors. Is thus essential for accurate translation.</text>
</comment>
<comment type="subunit">
    <text evidence="1">Homodimer. Part of the ribosomal stalk of the 50S ribosomal subunit. Forms a multimeric L10(L12)X complex, where L10 forms an elongated spine to which 2 to 4 L12 dimers bind in a sequential fashion. Binds GTP-bound translation factors.</text>
</comment>
<comment type="similarity">
    <text evidence="1">Belongs to the bacterial ribosomal protein bL12 family.</text>
</comment>
<keyword id="KW-1185">Reference proteome</keyword>
<keyword id="KW-0687">Ribonucleoprotein</keyword>
<keyword id="KW-0689">Ribosomal protein</keyword>
<evidence type="ECO:0000255" key="1">
    <source>
        <dbReference type="HAMAP-Rule" id="MF_00368"/>
    </source>
</evidence>
<evidence type="ECO:0000305" key="2"/>
<accession>Q1GSF9</accession>
<protein>
    <recommendedName>
        <fullName evidence="1">Large ribosomal subunit protein bL12</fullName>
    </recommendedName>
    <alternativeName>
        <fullName evidence="2">50S ribosomal protein L7/L12</fullName>
    </alternativeName>
</protein>
<gene>
    <name evidence="1" type="primary">rplL</name>
    <name type="ordered locus">Sala_1700</name>
</gene>